<proteinExistence type="inferred from homology"/>
<keyword id="KW-0378">Hydrolase</keyword>
<keyword id="KW-0479">Metal-binding</keyword>
<keyword id="KW-1185">Reference proteome</keyword>
<keyword id="KW-0823">Tryptophan catabolism</keyword>
<keyword id="KW-0862">Zinc</keyword>
<sequence length="209" mass="22776">MKRLWDISPPVSADSPVFPGDTPYRQQWKWSLTPDCPVNVSEITLSPHIGAHADAPLHYENGAAAIGAVALEPFLGPCRVIHAIGCGPLILPEHLAHAQAGLPPRVLVRTARHAALQWWVDDFSAYAPQTIEWLAGRGVTLIGIDTPSIDPASSKTLDSHHAIRRHDMRVLENLRLDDVDEGDYELIALPLALVQADASPVRAVLRELA</sequence>
<accession>Q7VYS5</accession>
<protein>
    <recommendedName>
        <fullName evidence="1">Kynurenine formamidase</fullName>
        <shortName evidence="1">KFA</shortName>
        <shortName evidence="1">KFase</shortName>
        <ecNumber evidence="1">3.5.1.9</ecNumber>
    </recommendedName>
    <alternativeName>
        <fullName evidence="1">Arylformamidase</fullName>
    </alternativeName>
    <alternativeName>
        <fullName evidence="1">N-formylkynurenine formamidase</fullName>
        <shortName evidence="1">FKF</shortName>
    </alternativeName>
</protein>
<evidence type="ECO:0000255" key="1">
    <source>
        <dbReference type="HAMAP-Rule" id="MF_01969"/>
    </source>
</evidence>
<organism>
    <name type="scientific">Bordetella pertussis (strain Tohama I / ATCC BAA-589 / NCTC 13251)</name>
    <dbReference type="NCBI Taxonomy" id="257313"/>
    <lineage>
        <taxon>Bacteria</taxon>
        <taxon>Pseudomonadati</taxon>
        <taxon>Pseudomonadota</taxon>
        <taxon>Betaproteobacteria</taxon>
        <taxon>Burkholderiales</taxon>
        <taxon>Alcaligenaceae</taxon>
        <taxon>Bordetella</taxon>
    </lineage>
</organism>
<comment type="function">
    <text evidence="1">Catalyzes the hydrolysis of N-formyl-L-kynurenine to L-kynurenine, the second step in the kynurenine pathway of tryptophan degradation.</text>
</comment>
<comment type="catalytic activity">
    <reaction evidence="1">
        <text>N-formyl-L-kynurenine + H2O = L-kynurenine + formate + H(+)</text>
        <dbReference type="Rhea" id="RHEA:13009"/>
        <dbReference type="ChEBI" id="CHEBI:15377"/>
        <dbReference type="ChEBI" id="CHEBI:15378"/>
        <dbReference type="ChEBI" id="CHEBI:15740"/>
        <dbReference type="ChEBI" id="CHEBI:57959"/>
        <dbReference type="ChEBI" id="CHEBI:58629"/>
        <dbReference type="EC" id="3.5.1.9"/>
    </reaction>
</comment>
<comment type="cofactor">
    <cofactor evidence="1">
        <name>Zn(2+)</name>
        <dbReference type="ChEBI" id="CHEBI:29105"/>
    </cofactor>
    <text evidence="1">Binds 2 zinc ions per subunit.</text>
</comment>
<comment type="pathway">
    <text evidence="1">Amino-acid degradation; L-tryptophan degradation via kynurenine pathway; L-kynurenine from L-tryptophan: step 2/2.</text>
</comment>
<comment type="subunit">
    <text evidence="1">Homodimer.</text>
</comment>
<comment type="similarity">
    <text evidence="1">Belongs to the Cyclase 1 superfamily. KynB family.</text>
</comment>
<dbReference type="EC" id="3.5.1.9" evidence="1"/>
<dbReference type="EMBL" id="BX640414">
    <property type="protein sequence ID" value="CAE41530.1"/>
    <property type="molecule type" value="Genomic_DNA"/>
</dbReference>
<dbReference type="RefSeq" id="NP_880006.1">
    <property type="nucleotide sequence ID" value="NC_002929.2"/>
</dbReference>
<dbReference type="RefSeq" id="WP_003810518.1">
    <property type="nucleotide sequence ID" value="NZ_CP039022.1"/>
</dbReference>
<dbReference type="SMR" id="Q7VYS5"/>
<dbReference type="STRING" id="257313.BP1234"/>
<dbReference type="PaxDb" id="257313-BP1234"/>
<dbReference type="GeneID" id="69601148"/>
<dbReference type="KEGG" id="bpe:BP1234"/>
<dbReference type="PATRIC" id="fig|257313.5.peg.1330"/>
<dbReference type="eggNOG" id="COG1878">
    <property type="taxonomic scope" value="Bacteria"/>
</dbReference>
<dbReference type="HOGENOM" id="CLU_030671_3_1_4"/>
<dbReference type="UniPathway" id="UPA00333">
    <property type="reaction ID" value="UER00454"/>
</dbReference>
<dbReference type="Proteomes" id="UP000002676">
    <property type="component" value="Chromosome"/>
</dbReference>
<dbReference type="GO" id="GO:0004061">
    <property type="term" value="F:arylformamidase activity"/>
    <property type="evidence" value="ECO:0000250"/>
    <property type="project" value="UniProtKB"/>
</dbReference>
<dbReference type="GO" id="GO:0004328">
    <property type="term" value="F:formamidase activity"/>
    <property type="evidence" value="ECO:0007669"/>
    <property type="project" value="InterPro"/>
</dbReference>
<dbReference type="GO" id="GO:0008270">
    <property type="term" value="F:zinc ion binding"/>
    <property type="evidence" value="ECO:0007669"/>
    <property type="project" value="UniProtKB-UniRule"/>
</dbReference>
<dbReference type="GO" id="GO:0043420">
    <property type="term" value="P:anthranilate metabolic process"/>
    <property type="evidence" value="ECO:0000250"/>
    <property type="project" value="UniProtKB"/>
</dbReference>
<dbReference type="GO" id="GO:0019441">
    <property type="term" value="P:L-tryptophan catabolic process to kynurenine"/>
    <property type="evidence" value="ECO:0000250"/>
    <property type="project" value="UniProtKB"/>
</dbReference>
<dbReference type="FunFam" id="3.50.30.50:FF:000001">
    <property type="entry name" value="Kynurenine formamidase"/>
    <property type="match status" value="1"/>
</dbReference>
<dbReference type="Gene3D" id="3.50.30.50">
    <property type="entry name" value="Putative cyclase"/>
    <property type="match status" value="1"/>
</dbReference>
<dbReference type="HAMAP" id="MF_01969">
    <property type="entry name" value="KynB"/>
    <property type="match status" value="1"/>
</dbReference>
<dbReference type="InterPro" id="IPR007325">
    <property type="entry name" value="KFase/CYL"/>
</dbReference>
<dbReference type="InterPro" id="IPR037175">
    <property type="entry name" value="KFase_sf"/>
</dbReference>
<dbReference type="InterPro" id="IPR017484">
    <property type="entry name" value="Kynurenine_formamidase_bac"/>
</dbReference>
<dbReference type="NCBIfam" id="TIGR03035">
    <property type="entry name" value="trp_arylform"/>
    <property type="match status" value="1"/>
</dbReference>
<dbReference type="PANTHER" id="PTHR31118">
    <property type="entry name" value="CYCLASE-LIKE PROTEIN 2"/>
    <property type="match status" value="1"/>
</dbReference>
<dbReference type="PANTHER" id="PTHR31118:SF32">
    <property type="entry name" value="KYNURENINE FORMAMIDASE"/>
    <property type="match status" value="1"/>
</dbReference>
<dbReference type="Pfam" id="PF04199">
    <property type="entry name" value="Cyclase"/>
    <property type="match status" value="1"/>
</dbReference>
<dbReference type="SUPFAM" id="SSF102198">
    <property type="entry name" value="Putative cyclase"/>
    <property type="match status" value="1"/>
</dbReference>
<reference key="1">
    <citation type="journal article" date="2003" name="Nat. Genet.">
        <title>Comparative analysis of the genome sequences of Bordetella pertussis, Bordetella parapertussis and Bordetella bronchiseptica.</title>
        <authorList>
            <person name="Parkhill J."/>
            <person name="Sebaihia M."/>
            <person name="Preston A."/>
            <person name="Murphy L.D."/>
            <person name="Thomson N.R."/>
            <person name="Harris D.E."/>
            <person name="Holden M.T.G."/>
            <person name="Churcher C.M."/>
            <person name="Bentley S.D."/>
            <person name="Mungall K.L."/>
            <person name="Cerdeno-Tarraga A.-M."/>
            <person name="Temple L."/>
            <person name="James K.D."/>
            <person name="Harris B."/>
            <person name="Quail M.A."/>
            <person name="Achtman M."/>
            <person name="Atkin R."/>
            <person name="Baker S."/>
            <person name="Basham D."/>
            <person name="Bason N."/>
            <person name="Cherevach I."/>
            <person name="Chillingworth T."/>
            <person name="Collins M."/>
            <person name="Cronin A."/>
            <person name="Davis P."/>
            <person name="Doggett J."/>
            <person name="Feltwell T."/>
            <person name="Goble A."/>
            <person name="Hamlin N."/>
            <person name="Hauser H."/>
            <person name="Holroyd S."/>
            <person name="Jagels K."/>
            <person name="Leather S."/>
            <person name="Moule S."/>
            <person name="Norberczak H."/>
            <person name="O'Neil S."/>
            <person name="Ormond D."/>
            <person name="Price C."/>
            <person name="Rabbinowitsch E."/>
            <person name="Rutter S."/>
            <person name="Sanders M."/>
            <person name="Saunders D."/>
            <person name="Seeger K."/>
            <person name="Sharp S."/>
            <person name="Simmonds M."/>
            <person name="Skelton J."/>
            <person name="Squares R."/>
            <person name="Squares S."/>
            <person name="Stevens K."/>
            <person name="Unwin L."/>
            <person name="Whitehead S."/>
            <person name="Barrell B.G."/>
            <person name="Maskell D.J."/>
        </authorList>
    </citation>
    <scope>NUCLEOTIDE SEQUENCE [LARGE SCALE GENOMIC DNA]</scope>
    <source>
        <strain>Tohama I / ATCC BAA-589 / NCTC 13251</strain>
    </source>
</reference>
<name>KYNB_BORPE</name>
<feature type="chain" id="PRO_0000362098" description="Kynurenine formamidase">
    <location>
        <begin position="1"/>
        <end position="209"/>
    </location>
</feature>
<feature type="active site" description="Proton donor/acceptor" evidence="1">
    <location>
        <position position="58"/>
    </location>
</feature>
<feature type="binding site" evidence="1">
    <location>
        <position position="18"/>
    </location>
    <ligand>
        <name>substrate</name>
    </ligand>
</feature>
<feature type="binding site" evidence="1">
    <location>
        <position position="48"/>
    </location>
    <ligand>
        <name>Zn(2+)</name>
        <dbReference type="ChEBI" id="CHEBI:29105"/>
        <label>1</label>
    </ligand>
</feature>
<feature type="binding site" evidence="1">
    <location>
        <position position="52"/>
    </location>
    <ligand>
        <name>Zn(2+)</name>
        <dbReference type="ChEBI" id="CHEBI:29105"/>
        <label>1</label>
    </ligand>
</feature>
<feature type="binding site" evidence="1">
    <location>
        <position position="54"/>
    </location>
    <ligand>
        <name>Zn(2+)</name>
        <dbReference type="ChEBI" id="CHEBI:29105"/>
        <label>1</label>
    </ligand>
</feature>
<feature type="binding site" evidence="1">
    <location>
        <position position="54"/>
    </location>
    <ligand>
        <name>Zn(2+)</name>
        <dbReference type="ChEBI" id="CHEBI:29105"/>
        <label>2</label>
    </ligand>
</feature>
<feature type="binding site" evidence="1">
    <location>
        <position position="160"/>
    </location>
    <ligand>
        <name>Zn(2+)</name>
        <dbReference type="ChEBI" id="CHEBI:29105"/>
        <label>2</label>
    </ligand>
</feature>
<feature type="binding site" evidence="1">
    <location>
        <position position="172"/>
    </location>
    <ligand>
        <name>Zn(2+)</name>
        <dbReference type="ChEBI" id="CHEBI:29105"/>
        <label>1</label>
    </ligand>
</feature>
<feature type="binding site" evidence="1">
    <location>
        <position position="172"/>
    </location>
    <ligand>
        <name>Zn(2+)</name>
        <dbReference type="ChEBI" id="CHEBI:29105"/>
        <label>2</label>
    </ligand>
</feature>
<gene>
    <name evidence="1" type="primary">kynB</name>
    <name type="ordered locus">BP1234</name>
</gene>